<organism>
    <name type="scientific">Danio rerio</name>
    <name type="common">Zebrafish</name>
    <name type="synonym">Brachydanio rerio</name>
    <dbReference type="NCBI Taxonomy" id="7955"/>
    <lineage>
        <taxon>Eukaryota</taxon>
        <taxon>Metazoa</taxon>
        <taxon>Chordata</taxon>
        <taxon>Craniata</taxon>
        <taxon>Vertebrata</taxon>
        <taxon>Euteleostomi</taxon>
        <taxon>Actinopterygii</taxon>
        <taxon>Neopterygii</taxon>
        <taxon>Teleostei</taxon>
        <taxon>Ostariophysi</taxon>
        <taxon>Cypriniformes</taxon>
        <taxon>Danionidae</taxon>
        <taxon>Danioninae</taxon>
        <taxon>Danio</taxon>
    </lineage>
</organism>
<protein>
    <recommendedName>
        <fullName>Mitochondrial Rho GTPase 2</fullName>
        <shortName>MIRO-2</shortName>
        <ecNumber evidence="2">3.6.5.-</ecNumber>
    </recommendedName>
    <alternativeName>
        <fullName>Ras homolog gene family member T2</fullName>
    </alternativeName>
</protein>
<gene>
    <name type="primary">rhot2</name>
    <name type="ORF">zgc:123249</name>
</gene>
<reference key="1">
    <citation type="submission" date="2005-11" db="EMBL/GenBank/DDBJ databases">
        <authorList>
            <consortium name="NIH - Zebrafish Gene Collection (ZGC) project"/>
        </authorList>
    </citation>
    <scope>NUCLEOTIDE SEQUENCE [LARGE SCALE MRNA]</scope>
    <source>
        <tissue>Testis</tissue>
    </source>
</reference>
<evidence type="ECO:0000250" key="1">
    <source>
        <dbReference type="UniProtKB" id="Q8IXI1"/>
    </source>
</evidence>
<evidence type="ECO:0000250" key="2">
    <source>
        <dbReference type="UniProtKB" id="Q8IXI2"/>
    </source>
</evidence>
<evidence type="ECO:0000255" key="3"/>
<evidence type="ECO:0000255" key="4">
    <source>
        <dbReference type="PROSITE-ProRule" id="PRU00448"/>
    </source>
</evidence>
<evidence type="ECO:0000255" key="5">
    <source>
        <dbReference type="PROSITE-ProRule" id="PRU00757"/>
    </source>
</evidence>
<evidence type="ECO:0000305" key="6"/>
<accession>Q32LU1</accession>
<proteinExistence type="evidence at transcript level"/>
<dbReference type="EC" id="3.6.5.-" evidence="2"/>
<dbReference type="EMBL" id="BC109430">
    <property type="protein sequence ID" value="AAI09431.1"/>
    <property type="molecule type" value="mRNA"/>
</dbReference>
<dbReference type="RefSeq" id="NP_001032768.1">
    <property type="nucleotide sequence ID" value="NM_001037679.2"/>
</dbReference>
<dbReference type="SMR" id="Q32LU1"/>
<dbReference type="FunCoup" id="Q32LU1">
    <property type="interactions" value="2664"/>
</dbReference>
<dbReference type="STRING" id="7955.ENSDARP00000061202"/>
<dbReference type="PaxDb" id="7955-ENSDARP00000061202"/>
<dbReference type="Ensembl" id="ENSDART00000061203">
    <property type="protein sequence ID" value="ENSDARP00000061202"/>
    <property type="gene ID" value="ENSDARG00000056328"/>
</dbReference>
<dbReference type="GeneID" id="557574"/>
<dbReference type="KEGG" id="dre:557574"/>
<dbReference type="AGR" id="ZFIN:ZDB-GENE-051120-96"/>
<dbReference type="CTD" id="89941"/>
<dbReference type="ZFIN" id="ZDB-GENE-051120-96">
    <property type="gene designation" value="rhot2"/>
</dbReference>
<dbReference type="eggNOG" id="KOG1707">
    <property type="taxonomic scope" value="Eukaryota"/>
</dbReference>
<dbReference type="HOGENOM" id="CLU_014255_3_1_1"/>
<dbReference type="InParanoid" id="Q32LU1"/>
<dbReference type="OMA" id="FWFAQKA"/>
<dbReference type="OrthoDB" id="10020961at2759"/>
<dbReference type="PhylomeDB" id="Q32LU1"/>
<dbReference type="TreeFam" id="TF300814"/>
<dbReference type="Reactome" id="R-DRE-9013419">
    <property type="pathway name" value="RHOT2 GTPase cycle"/>
</dbReference>
<dbReference type="PRO" id="PR:Q32LU1"/>
<dbReference type="Proteomes" id="UP000000437">
    <property type="component" value="Chromosome 24"/>
</dbReference>
<dbReference type="Bgee" id="ENSDARG00000056328">
    <property type="expression patterns" value="Expressed in mature ovarian follicle and 24 other cell types or tissues"/>
</dbReference>
<dbReference type="GO" id="GO:0005741">
    <property type="term" value="C:mitochondrial outer membrane"/>
    <property type="evidence" value="ECO:0000250"/>
    <property type="project" value="UniProtKB"/>
</dbReference>
<dbReference type="GO" id="GO:0005739">
    <property type="term" value="C:mitochondrion"/>
    <property type="evidence" value="ECO:0000314"/>
    <property type="project" value="ZFIN"/>
</dbReference>
<dbReference type="GO" id="GO:0005509">
    <property type="term" value="F:calcium ion binding"/>
    <property type="evidence" value="ECO:0007669"/>
    <property type="project" value="InterPro"/>
</dbReference>
<dbReference type="GO" id="GO:0005525">
    <property type="term" value="F:GTP binding"/>
    <property type="evidence" value="ECO:0000318"/>
    <property type="project" value="GO_Central"/>
</dbReference>
<dbReference type="GO" id="GO:0003924">
    <property type="term" value="F:GTPase activity"/>
    <property type="evidence" value="ECO:0000318"/>
    <property type="project" value="GO_Central"/>
</dbReference>
<dbReference type="GO" id="GO:0019725">
    <property type="term" value="P:cellular homeostasis"/>
    <property type="evidence" value="ECO:0000250"/>
    <property type="project" value="UniProtKB"/>
</dbReference>
<dbReference type="GO" id="GO:0097345">
    <property type="term" value="P:mitochondrial outer membrane permeabilization"/>
    <property type="evidence" value="ECO:0000250"/>
    <property type="project" value="UniProtKB"/>
</dbReference>
<dbReference type="GO" id="GO:0007005">
    <property type="term" value="P:mitochondrion organization"/>
    <property type="evidence" value="ECO:0000318"/>
    <property type="project" value="GO_Central"/>
</dbReference>
<dbReference type="GO" id="GO:0047497">
    <property type="term" value="P:mitochondrion transport along microtubule"/>
    <property type="evidence" value="ECO:0000250"/>
    <property type="project" value="UniProtKB"/>
</dbReference>
<dbReference type="CDD" id="cd01893">
    <property type="entry name" value="Miro1"/>
    <property type="match status" value="1"/>
</dbReference>
<dbReference type="CDD" id="cd01892">
    <property type="entry name" value="Miro2"/>
    <property type="match status" value="1"/>
</dbReference>
<dbReference type="FunFam" id="1.10.238.10:FF:000011">
    <property type="entry name" value="Mitochondrial Rho GTPase"/>
    <property type="match status" value="1"/>
</dbReference>
<dbReference type="FunFam" id="1.10.238.10:FF:000021">
    <property type="entry name" value="Mitochondrial Rho GTPase"/>
    <property type="match status" value="1"/>
</dbReference>
<dbReference type="FunFam" id="3.40.50.300:FF:000170">
    <property type="entry name" value="Mitochondrial Rho GTPase"/>
    <property type="match status" value="1"/>
</dbReference>
<dbReference type="FunFam" id="3.40.50.300:FF:000553">
    <property type="entry name" value="Mitochondrial Rho GTPase"/>
    <property type="match status" value="1"/>
</dbReference>
<dbReference type="Gene3D" id="1.10.238.10">
    <property type="entry name" value="EF-hand"/>
    <property type="match status" value="2"/>
</dbReference>
<dbReference type="Gene3D" id="3.40.50.300">
    <property type="entry name" value="P-loop containing nucleotide triphosphate hydrolases"/>
    <property type="match status" value="2"/>
</dbReference>
<dbReference type="InterPro" id="IPR011992">
    <property type="entry name" value="EF-hand-dom_pair"/>
</dbReference>
<dbReference type="InterPro" id="IPR018247">
    <property type="entry name" value="EF_Hand_1_Ca_BS"/>
</dbReference>
<dbReference type="InterPro" id="IPR013566">
    <property type="entry name" value="EF_hand_assoc_1"/>
</dbReference>
<dbReference type="InterPro" id="IPR013567">
    <property type="entry name" value="EF_hand_assoc_2"/>
</dbReference>
<dbReference type="InterPro" id="IPR002048">
    <property type="entry name" value="EF_hand_dom"/>
</dbReference>
<dbReference type="InterPro" id="IPR021181">
    <property type="entry name" value="Miro"/>
</dbReference>
<dbReference type="InterPro" id="IPR052266">
    <property type="entry name" value="Miro-EF-hand_domain"/>
</dbReference>
<dbReference type="InterPro" id="IPR020860">
    <property type="entry name" value="MIRO_dom"/>
</dbReference>
<dbReference type="InterPro" id="IPR027417">
    <property type="entry name" value="P-loop_NTPase"/>
</dbReference>
<dbReference type="InterPro" id="IPR005225">
    <property type="entry name" value="Small_GTP-bd"/>
</dbReference>
<dbReference type="InterPro" id="IPR001806">
    <property type="entry name" value="Small_GTPase"/>
</dbReference>
<dbReference type="NCBIfam" id="TIGR00231">
    <property type="entry name" value="small_GTP"/>
    <property type="match status" value="1"/>
</dbReference>
<dbReference type="PANTHER" id="PTHR46819">
    <property type="entry name" value="EF-HAND CALCIUM-BINDING DOMAIN-CONTAINING PROTEIN 7"/>
    <property type="match status" value="1"/>
</dbReference>
<dbReference type="PANTHER" id="PTHR46819:SF1">
    <property type="entry name" value="EF-HAND CALCIUM-BINDING DOMAIN-CONTAINING PROTEIN 7"/>
    <property type="match status" value="1"/>
</dbReference>
<dbReference type="Pfam" id="PF08355">
    <property type="entry name" value="EF_assoc_1"/>
    <property type="match status" value="1"/>
</dbReference>
<dbReference type="Pfam" id="PF08356">
    <property type="entry name" value="EF_assoc_2"/>
    <property type="match status" value="1"/>
</dbReference>
<dbReference type="Pfam" id="PF00071">
    <property type="entry name" value="Ras"/>
    <property type="match status" value="2"/>
</dbReference>
<dbReference type="PIRSF" id="PIRSF037488">
    <property type="entry name" value="Mt_Rho_GTPase"/>
    <property type="match status" value="1"/>
</dbReference>
<dbReference type="PRINTS" id="PR00449">
    <property type="entry name" value="RASTRNSFRMNG"/>
</dbReference>
<dbReference type="SMART" id="SM00175">
    <property type="entry name" value="RAB"/>
    <property type="match status" value="1"/>
</dbReference>
<dbReference type="SMART" id="SM00173">
    <property type="entry name" value="RAS"/>
    <property type="match status" value="1"/>
</dbReference>
<dbReference type="SMART" id="SM00174">
    <property type="entry name" value="RHO"/>
    <property type="match status" value="1"/>
</dbReference>
<dbReference type="SUPFAM" id="SSF47473">
    <property type="entry name" value="EF-hand"/>
    <property type="match status" value="1"/>
</dbReference>
<dbReference type="SUPFAM" id="SSF52540">
    <property type="entry name" value="P-loop containing nucleoside triphosphate hydrolases"/>
    <property type="match status" value="2"/>
</dbReference>
<dbReference type="PROSITE" id="PS00018">
    <property type="entry name" value="EF_HAND_1"/>
    <property type="match status" value="1"/>
</dbReference>
<dbReference type="PROSITE" id="PS50222">
    <property type="entry name" value="EF_HAND_2"/>
    <property type="match status" value="2"/>
</dbReference>
<dbReference type="PROSITE" id="PS51423">
    <property type="entry name" value="MIRO"/>
    <property type="match status" value="2"/>
</dbReference>
<name>MIRO2_DANRE</name>
<keyword id="KW-0106">Calcium</keyword>
<keyword id="KW-0342">GTP-binding</keyword>
<keyword id="KW-0378">Hydrolase</keyword>
<keyword id="KW-0460">Magnesium</keyword>
<keyword id="KW-0472">Membrane</keyword>
<keyword id="KW-0479">Metal-binding</keyword>
<keyword id="KW-0496">Mitochondrion</keyword>
<keyword id="KW-1000">Mitochondrion outer membrane</keyword>
<keyword id="KW-0547">Nucleotide-binding</keyword>
<keyword id="KW-1185">Reference proteome</keyword>
<keyword id="KW-0677">Repeat</keyword>
<keyword id="KW-0812">Transmembrane</keyword>
<keyword id="KW-1133">Transmembrane helix</keyword>
<feature type="chain" id="PRO_0000239323" description="Mitochondrial Rho GTPase 2">
    <location>
        <begin position="1"/>
        <end position="617"/>
    </location>
</feature>
<feature type="topological domain" description="Cytoplasmic" evidence="3">
    <location>
        <begin position="1"/>
        <end position="590"/>
    </location>
</feature>
<feature type="transmembrane region" description="Helical; Anchor for type IV membrane protein" evidence="3">
    <location>
        <begin position="591"/>
        <end position="613"/>
    </location>
</feature>
<feature type="topological domain" description="Mitochondrial intermembrane" evidence="3">
    <location>
        <begin position="614"/>
        <end position="617"/>
    </location>
</feature>
<feature type="domain" description="Miro 1" evidence="5">
    <location>
        <begin position="2"/>
        <end position="168"/>
    </location>
</feature>
<feature type="domain" description="EF-hand 1" evidence="4">
    <location>
        <begin position="184"/>
        <end position="219"/>
    </location>
</feature>
<feature type="domain" description="EF-hand 2" evidence="4">
    <location>
        <begin position="304"/>
        <end position="339"/>
    </location>
</feature>
<feature type="domain" description="Miro 2" evidence="5">
    <location>
        <begin position="416"/>
        <end position="578"/>
    </location>
</feature>
<feature type="binding site" evidence="2">
    <location>
        <position position="16"/>
    </location>
    <ligand>
        <name>GTP</name>
        <dbReference type="ChEBI" id="CHEBI:37565"/>
        <label>1</label>
    </ligand>
</feature>
<feature type="binding site" evidence="2">
    <location>
        <position position="17"/>
    </location>
    <ligand>
        <name>GTP</name>
        <dbReference type="ChEBI" id="CHEBI:37565"/>
        <label>1</label>
    </ligand>
</feature>
<feature type="binding site" evidence="2">
    <location>
        <position position="18"/>
    </location>
    <ligand>
        <name>GTP</name>
        <dbReference type="ChEBI" id="CHEBI:37565"/>
        <label>1</label>
    </ligand>
</feature>
<feature type="binding site" evidence="2">
    <location>
        <position position="18"/>
    </location>
    <ligand>
        <name>Mg(2+)</name>
        <dbReference type="ChEBI" id="CHEBI:18420"/>
        <label>1</label>
    </ligand>
</feature>
<feature type="binding site" evidence="2">
    <location>
        <position position="19"/>
    </location>
    <ligand>
        <name>GTP</name>
        <dbReference type="ChEBI" id="CHEBI:37565"/>
        <label>1</label>
    </ligand>
</feature>
<feature type="binding site" evidence="2">
    <location>
        <position position="57"/>
    </location>
    <ligand>
        <name>Mg(2+)</name>
        <dbReference type="ChEBI" id="CHEBI:18420"/>
        <label>1</label>
    </ligand>
</feature>
<feature type="binding site" evidence="2">
    <location>
        <position position="59"/>
    </location>
    <ligand>
        <name>GTP</name>
        <dbReference type="ChEBI" id="CHEBI:37565"/>
        <label>1</label>
    </ligand>
</feature>
<feature type="binding site" evidence="2">
    <location>
        <position position="118"/>
    </location>
    <ligand>
        <name>GTP</name>
        <dbReference type="ChEBI" id="CHEBI:37565"/>
        <label>1</label>
    </ligand>
</feature>
<feature type="binding site" evidence="2">
    <location>
        <position position="119"/>
    </location>
    <ligand>
        <name>GTP</name>
        <dbReference type="ChEBI" id="CHEBI:37565"/>
        <label>1</label>
    </ligand>
</feature>
<feature type="binding site" evidence="2">
    <location>
        <position position="121"/>
    </location>
    <ligand>
        <name>GTP</name>
        <dbReference type="ChEBI" id="CHEBI:37565"/>
        <label>1</label>
    </ligand>
</feature>
<feature type="binding site" evidence="2">
    <location>
        <position position="149"/>
    </location>
    <ligand>
        <name>GTP</name>
        <dbReference type="ChEBI" id="CHEBI:37565"/>
        <label>1</label>
    </ligand>
</feature>
<feature type="binding site" evidence="2">
    <location>
        <position position="150"/>
    </location>
    <ligand>
        <name>GTP</name>
        <dbReference type="ChEBI" id="CHEBI:37565"/>
        <label>1</label>
    </ligand>
</feature>
<feature type="binding site" evidence="4">
    <location>
        <position position="197"/>
    </location>
    <ligand>
        <name>Ca(2+)</name>
        <dbReference type="ChEBI" id="CHEBI:29108"/>
        <label>1</label>
    </ligand>
</feature>
<feature type="binding site" evidence="4">
    <location>
        <position position="199"/>
    </location>
    <ligand>
        <name>Ca(2+)</name>
        <dbReference type="ChEBI" id="CHEBI:29108"/>
        <label>1</label>
    </ligand>
</feature>
<feature type="binding site" evidence="4">
    <location>
        <position position="201"/>
    </location>
    <ligand>
        <name>Ca(2+)</name>
        <dbReference type="ChEBI" id="CHEBI:29108"/>
        <label>1</label>
    </ligand>
</feature>
<feature type="binding site" evidence="4">
    <location>
        <position position="208"/>
    </location>
    <ligand>
        <name>Ca(2+)</name>
        <dbReference type="ChEBI" id="CHEBI:29108"/>
        <label>1</label>
    </ligand>
</feature>
<feature type="binding site" evidence="6">
    <location>
        <position position="317"/>
    </location>
    <ligand>
        <name>Ca(2+)</name>
        <dbReference type="ChEBI" id="CHEBI:29108"/>
        <label>2</label>
    </ligand>
</feature>
<feature type="binding site" evidence="6">
    <location>
        <position position="319"/>
    </location>
    <ligand>
        <name>Ca(2+)</name>
        <dbReference type="ChEBI" id="CHEBI:29108"/>
        <label>2</label>
    </ligand>
</feature>
<feature type="binding site" evidence="6">
    <location>
        <position position="321"/>
    </location>
    <ligand>
        <name>Ca(2+)</name>
        <dbReference type="ChEBI" id="CHEBI:29108"/>
        <label>2</label>
    </ligand>
</feature>
<feature type="binding site" evidence="6">
    <location>
        <position position="328"/>
    </location>
    <ligand>
        <name>Ca(2+)</name>
        <dbReference type="ChEBI" id="CHEBI:29108"/>
        <label>2</label>
    </ligand>
</feature>
<feature type="binding site" evidence="1">
    <location>
        <position position="428"/>
    </location>
    <ligand>
        <name>GTP</name>
        <dbReference type="ChEBI" id="CHEBI:37565"/>
        <label>2</label>
    </ligand>
</feature>
<feature type="binding site" evidence="1">
    <location>
        <position position="430"/>
    </location>
    <ligand>
        <name>GTP</name>
        <dbReference type="ChEBI" id="CHEBI:37565"/>
        <label>2</label>
    </ligand>
</feature>
<feature type="binding site" evidence="1">
    <location>
        <position position="431"/>
    </location>
    <ligand>
        <name>GTP</name>
        <dbReference type="ChEBI" id="CHEBI:37565"/>
        <label>2</label>
    </ligand>
</feature>
<feature type="binding site" evidence="1">
    <location>
        <position position="432"/>
    </location>
    <ligand>
        <name>GTP</name>
        <dbReference type="ChEBI" id="CHEBI:37565"/>
        <label>2</label>
    </ligand>
</feature>
<feature type="binding site" evidence="1">
    <location>
        <position position="432"/>
    </location>
    <ligand>
        <name>Mg(2+)</name>
        <dbReference type="ChEBI" id="CHEBI:18420"/>
        <label>2</label>
    </ligand>
</feature>
<feature type="binding site" evidence="1">
    <location>
        <position position="474"/>
    </location>
    <ligand>
        <name>Mg(2+)</name>
        <dbReference type="ChEBI" id="CHEBI:18420"/>
        <label>2</label>
    </ligand>
</feature>
<feature type="binding site" evidence="1">
    <location>
        <position position="528"/>
    </location>
    <ligand>
        <name>GTP</name>
        <dbReference type="ChEBI" id="CHEBI:37565"/>
        <label>2</label>
    </ligand>
</feature>
<feature type="binding site" evidence="1">
    <location>
        <position position="530"/>
    </location>
    <ligand>
        <name>GTP</name>
        <dbReference type="ChEBI" id="CHEBI:37565"/>
        <label>2</label>
    </ligand>
</feature>
<comment type="function">
    <text evidence="1 2">Atypical mitochondrial nucleoside-triphosphatase (NTPase) involved in mitochondrial trafficking. Probably involved in control of anterograde transport of mitochondria and their subcellular distribution. Can hydrolyze GTP, ATP and UTP (By similarity).</text>
</comment>
<comment type="catalytic activity">
    <reaction evidence="2">
        <text>GTP + H2O = GDP + phosphate + H(+)</text>
        <dbReference type="Rhea" id="RHEA:19669"/>
        <dbReference type="ChEBI" id="CHEBI:15377"/>
        <dbReference type="ChEBI" id="CHEBI:15378"/>
        <dbReference type="ChEBI" id="CHEBI:37565"/>
        <dbReference type="ChEBI" id="CHEBI:43474"/>
        <dbReference type="ChEBI" id="CHEBI:58189"/>
    </reaction>
    <physiologicalReaction direction="left-to-right" evidence="2">
        <dbReference type="Rhea" id="RHEA:19670"/>
    </physiologicalReaction>
</comment>
<comment type="catalytic activity">
    <reaction evidence="1">
        <text>ATP + H2O = ADP + phosphate + H(+)</text>
        <dbReference type="Rhea" id="RHEA:13065"/>
        <dbReference type="ChEBI" id="CHEBI:15377"/>
        <dbReference type="ChEBI" id="CHEBI:15378"/>
        <dbReference type="ChEBI" id="CHEBI:30616"/>
        <dbReference type="ChEBI" id="CHEBI:43474"/>
        <dbReference type="ChEBI" id="CHEBI:456216"/>
    </reaction>
    <physiologicalReaction direction="left-to-right" evidence="1">
        <dbReference type="Rhea" id="RHEA:13066"/>
    </physiologicalReaction>
</comment>
<comment type="catalytic activity">
    <reaction evidence="1">
        <text>UTP + H2O = UDP + phosphate + H(+)</text>
        <dbReference type="Rhea" id="RHEA:64900"/>
        <dbReference type="ChEBI" id="CHEBI:15377"/>
        <dbReference type="ChEBI" id="CHEBI:15378"/>
        <dbReference type="ChEBI" id="CHEBI:43474"/>
        <dbReference type="ChEBI" id="CHEBI:46398"/>
        <dbReference type="ChEBI" id="CHEBI:58223"/>
    </reaction>
    <physiologicalReaction direction="left-to-right" evidence="1">
        <dbReference type="Rhea" id="RHEA:64901"/>
    </physiologicalReaction>
</comment>
<comment type="subunit">
    <text evidence="1">Homodimer.</text>
</comment>
<comment type="subcellular location">
    <subcellularLocation>
        <location evidence="1">Mitochondrion outer membrane</location>
        <topology evidence="1">Single-pass type IV membrane protein</topology>
    </subcellularLocation>
</comment>
<comment type="similarity">
    <text evidence="5 6">Belongs to the mitochondrial Rho GTPase family.</text>
</comment>
<sequence length="617" mass="69740">MKRDVRILLLGEPKVGKTSLIMSLVGEEFPEQVPLRAEEITIPADVTPEKVPTHIVDYSENEQTDEVLREEIVKANVVCVVYDVTQEETIDKIRTKWIPLVNGGAEKGSKIPIILVGNKSDLRSGSSMETILPIMNQFSEIETCVECSAKNLKNISELFYYAQKAVLHPTAPLYDPEDKQLKAQCVRALSRIFSISDQDNDHILSDAELNCFQKLCFGNPLAPQALEDVKTVVWKNTSDGVQDNGLTLNGFLFLNTLFIQRGRHETTWTILRKFGYDDTLELTDDYLYPVLRVSVGCTTELNHLGHQFLLKLFEKYDEDKDSALSPAELKNLFSVLPYMPWSSTVYSNIPLTDDCYISQHGYLCQWMLLAYLDVHRCLEHLGYLGYPILMEQECQTSAITVTREKALDLDNRQTQRTVFLCKVIGPRGTGKTDFLRAFLQRSTERSDRDPGAPSIYAINTVSIANQDKYLILEEVDVETEFLKAADAACDVACLMYDVSDPDSFNYCASIYKQHYMDSGIPCVVLGSKADLVEVKQHHGMSPSEFCYKHRLPSPLHFSALLTHTHTHIYSKLTWAAMYPHLNGSDMSSTSFWLRVTLGATIAAMLGFALYRAFSRHK</sequence>